<protein>
    <recommendedName>
        <fullName evidence="1">Glucose-6-phosphate isomerase</fullName>
        <shortName evidence="1">GPI</shortName>
        <ecNumber evidence="1">5.3.1.9</ecNumber>
    </recommendedName>
    <alternativeName>
        <fullName evidence="1">Phosphoglucose isomerase</fullName>
        <shortName evidence="1">PGI</shortName>
    </alternativeName>
    <alternativeName>
        <fullName evidence="1">Phosphohexose isomerase</fullName>
        <shortName evidence="1">PHI</shortName>
    </alternativeName>
</protein>
<sequence>MTLNSLPVWPALQAHYEEIRDAHLRDWFAPANDRAPTRAERFTFEGGGLAADFSKNRLTDATLALLVRLAREAGVEARRDAMFAGETVNPTEGRAALHTALRANAADAPFQAQVAAERAKMARFADAVRSGAWTGYTGKRIRHVVNIGIGGSDLGPKMVVHALHHVATPDIATHFVSNVDGADLARVLERIDPEETLAIIVSKTFTTLETMTNARSLRDWFVANGCPEGALAKHFVGVSANPAEVVKFGIAEANVFEMWDWVGGRYSLWSAVGLSIMIAIGPERFDELLAGARDMDEHFRTAPLERNLPALQGLVGIWYRNFFGAQSYLVAPYSEALHYLPSYLQQLEMESNGKSARIDGAFVDYPTSAVTWGEPGTNGQHAFFQMLHQGPTLVPIDFIAVLTPEHPLASHHPKLLANCFAQSEALMLGRTLDEARKIAGPAKPELAPHLTFPGNRPTTTLLVDALTPRTLGALIALYEHKVLVQAAVWNINPFDQWGVELGKILGKVVEADLTAAQVDPAKHDSSTSALIARARKALGE</sequence>
<name>G6PI_BURP6</name>
<organism>
    <name type="scientific">Burkholderia pseudomallei (strain 668)</name>
    <dbReference type="NCBI Taxonomy" id="320373"/>
    <lineage>
        <taxon>Bacteria</taxon>
        <taxon>Pseudomonadati</taxon>
        <taxon>Pseudomonadota</taxon>
        <taxon>Betaproteobacteria</taxon>
        <taxon>Burkholderiales</taxon>
        <taxon>Burkholderiaceae</taxon>
        <taxon>Burkholderia</taxon>
        <taxon>pseudomallei group</taxon>
    </lineage>
</organism>
<gene>
    <name evidence="1" type="primary">pgi</name>
    <name type="ordered locus">BURPS668_2308</name>
</gene>
<dbReference type="EC" id="5.3.1.9" evidence="1"/>
<dbReference type="EMBL" id="CP000570">
    <property type="protein sequence ID" value="ABN81484.1"/>
    <property type="molecule type" value="Genomic_DNA"/>
</dbReference>
<dbReference type="RefSeq" id="WP_011851766.1">
    <property type="nucleotide sequence ID" value="NC_009074.1"/>
</dbReference>
<dbReference type="SMR" id="A3NAH2"/>
<dbReference type="KEGG" id="bpd:BURPS668_2308"/>
<dbReference type="HOGENOM" id="CLU_017947_3_1_4"/>
<dbReference type="UniPathway" id="UPA00109">
    <property type="reaction ID" value="UER00181"/>
</dbReference>
<dbReference type="UniPathway" id="UPA00138"/>
<dbReference type="GO" id="GO:0005829">
    <property type="term" value="C:cytosol"/>
    <property type="evidence" value="ECO:0007669"/>
    <property type="project" value="TreeGrafter"/>
</dbReference>
<dbReference type="GO" id="GO:0097367">
    <property type="term" value="F:carbohydrate derivative binding"/>
    <property type="evidence" value="ECO:0007669"/>
    <property type="project" value="InterPro"/>
</dbReference>
<dbReference type="GO" id="GO:0004347">
    <property type="term" value="F:glucose-6-phosphate isomerase activity"/>
    <property type="evidence" value="ECO:0007669"/>
    <property type="project" value="UniProtKB-UniRule"/>
</dbReference>
<dbReference type="GO" id="GO:0048029">
    <property type="term" value="F:monosaccharide binding"/>
    <property type="evidence" value="ECO:0007669"/>
    <property type="project" value="TreeGrafter"/>
</dbReference>
<dbReference type="GO" id="GO:0006094">
    <property type="term" value="P:gluconeogenesis"/>
    <property type="evidence" value="ECO:0007669"/>
    <property type="project" value="UniProtKB-UniRule"/>
</dbReference>
<dbReference type="GO" id="GO:0051156">
    <property type="term" value="P:glucose 6-phosphate metabolic process"/>
    <property type="evidence" value="ECO:0007669"/>
    <property type="project" value="TreeGrafter"/>
</dbReference>
<dbReference type="GO" id="GO:0006096">
    <property type="term" value="P:glycolytic process"/>
    <property type="evidence" value="ECO:0007669"/>
    <property type="project" value="UniProtKB-UniRule"/>
</dbReference>
<dbReference type="CDD" id="cd05015">
    <property type="entry name" value="SIS_PGI_1"/>
    <property type="match status" value="1"/>
</dbReference>
<dbReference type="CDD" id="cd05016">
    <property type="entry name" value="SIS_PGI_2"/>
    <property type="match status" value="1"/>
</dbReference>
<dbReference type="Gene3D" id="1.10.1390.10">
    <property type="match status" value="1"/>
</dbReference>
<dbReference type="Gene3D" id="3.40.50.10490">
    <property type="entry name" value="Glucose-6-phosphate isomerase like protein, domain 1"/>
    <property type="match status" value="2"/>
</dbReference>
<dbReference type="HAMAP" id="MF_00473">
    <property type="entry name" value="G6P_isomerase"/>
    <property type="match status" value="1"/>
</dbReference>
<dbReference type="InterPro" id="IPR001672">
    <property type="entry name" value="G6P_Isomerase"/>
</dbReference>
<dbReference type="InterPro" id="IPR023096">
    <property type="entry name" value="G6P_Isomerase_C"/>
</dbReference>
<dbReference type="InterPro" id="IPR018189">
    <property type="entry name" value="Phosphoglucose_isomerase_CS"/>
</dbReference>
<dbReference type="InterPro" id="IPR046348">
    <property type="entry name" value="SIS_dom_sf"/>
</dbReference>
<dbReference type="InterPro" id="IPR035476">
    <property type="entry name" value="SIS_PGI_1"/>
</dbReference>
<dbReference type="InterPro" id="IPR035482">
    <property type="entry name" value="SIS_PGI_2"/>
</dbReference>
<dbReference type="NCBIfam" id="NF001211">
    <property type="entry name" value="PRK00179.1"/>
    <property type="match status" value="1"/>
</dbReference>
<dbReference type="PANTHER" id="PTHR11469">
    <property type="entry name" value="GLUCOSE-6-PHOSPHATE ISOMERASE"/>
    <property type="match status" value="1"/>
</dbReference>
<dbReference type="PANTHER" id="PTHR11469:SF1">
    <property type="entry name" value="GLUCOSE-6-PHOSPHATE ISOMERASE"/>
    <property type="match status" value="1"/>
</dbReference>
<dbReference type="Pfam" id="PF00342">
    <property type="entry name" value="PGI"/>
    <property type="match status" value="1"/>
</dbReference>
<dbReference type="PRINTS" id="PR00662">
    <property type="entry name" value="G6PISOMERASE"/>
</dbReference>
<dbReference type="SUPFAM" id="SSF53697">
    <property type="entry name" value="SIS domain"/>
    <property type="match status" value="1"/>
</dbReference>
<dbReference type="PROSITE" id="PS00765">
    <property type="entry name" value="P_GLUCOSE_ISOMERASE_1"/>
    <property type="match status" value="1"/>
</dbReference>
<dbReference type="PROSITE" id="PS00174">
    <property type="entry name" value="P_GLUCOSE_ISOMERASE_2"/>
    <property type="match status" value="1"/>
</dbReference>
<dbReference type="PROSITE" id="PS51463">
    <property type="entry name" value="P_GLUCOSE_ISOMERASE_3"/>
    <property type="match status" value="1"/>
</dbReference>
<reference key="1">
    <citation type="journal article" date="2010" name="Genome Biol. Evol.">
        <title>Continuing evolution of Burkholderia mallei through genome reduction and large-scale rearrangements.</title>
        <authorList>
            <person name="Losada L."/>
            <person name="Ronning C.M."/>
            <person name="DeShazer D."/>
            <person name="Woods D."/>
            <person name="Fedorova N."/>
            <person name="Kim H.S."/>
            <person name="Shabalina S.A."/>
            <person name="Pearson T.R."/>
            <person name="Brinkac L."/>
            <person name="Tan P."/>
            <person name="Nandi T."/>
            <person name="Crabtree J."/>
            <person name="Badger J."/>
            <person name="Beckstrom-Sternberg S."/>
            <person name="Saqib M."/>
            <person name="Schutzer S.E."/>
            <person name="Keim P."/>
            <person name="Nierman W.C."/>
        </authorList>
    </citation>
    <scope>NUCLEOTIDE SEQUENCE [LARGE SCALE GENOMIC DNA]</scope>
    <source>
        <strain>668</strain>
    </source>
</reference>
<comment type="function">
    <text evidence="1">Catalyzes the reversible isomerization of glucose-6-phosphate to fructose-6-phosphate.</text>
</comment>
<comment type="catalytic activity">
    <reaction evidence="1">
        <text>alpha-D-glucose 6-phosphate = beta-D-fructose 6-phosphate</text>
        <dbReference type="Rhea" id="RHEA:11816"/>
        <dbReference type="ChEBI" id="CHEBI:57634"/>
        <dbReference type="ChEBI" id="CHEBI:58225"/>
        <dbReference type="EC" id="5.3.1.9"/>
    </reaction>
</comment>
<comment type="pathway">
    <text evidence="1">Carbohydrate biosynthesis; gluconeogenesis.</text>
</comment>
<comment type="pathway">
    <text evidence="1">Carbohydrate degradation; glycolysis; D-glyceraldehyde 3-phosphate and glycerone phosphate from D-glucose: step 2/4.</text>
</comment>
<comment type="subcellular location">
    <subcellularLocation>
        <location evidence="1">Cytoplasm</location>
    </subcellularLocation>
</comment>
<comment type="similarity">
    <text evidence="1">Belongs to the GPI family.</text>
</comment>
<accession>A3NAH2</accession>
<evidence type="ECO:0000255" key="1">
    <source>
        <dbReference type="HAMAP-Rule" id="MF_00473"/>
    </source>
</evidence>
<proteinExistence type="inferred from homology"/>
<feature type="chain" id="PRO_1000013950" description="Glucose-6-phosphate isomerase">
    <location>
        <begin position="1"/>
        <end position="540"/>
    </location>
</feature>
<feature type="active site" description="Proton donor" evidence="1">
    <location>
        <position position="350"/>
    </location>
</feature>
<feature type="active site" evidence="1">
    <location>
        <position position="381"/>
    </location>
</feature>
<feature type="active site" evidence="1">
    <location>
        <position position="503"/>
    </location>
</feature>
<keyword id="KW-0963">Cytoplasm</keyword>
<keyword id="KW-0312">Gluconeogenesis</keyword>
<keyword id="KW-0324">Glycolysis</keyword>
<keyword id="KW-0413">Isomerase</keyword>